<feature type="chain" id="PRO_0000362284" description="ATP synthase subunit a">
    <location>
        <begin position="1"/>
        <end position="262"/>
    </location>
</feature>
<feature type="transmembrane region" description="Helical" evidence="1">
    <location>
        <begin position="50"/>
        <end position="70"/>
    </location>
</feature>
<feature type="transmembrane region" description="Helical" evidence="1">
    <location>
        <begin position="107"/>
        <end position="127"/>
    </location>
</feature>
<feature type="transmembrane region" description="Helical" evidence="1">
    <location>
        <begin position="141"/>
        <end position="161"/>
    </location>
</feature>
<feature type="transmembrane region" description="Helical" evidence="1">
    <location>
        <begin position="194"/>
        <end position="214"/>
    </location>
</feature>
<feature type="transmembrane region" description="Helical" evidence="1">
    <location>
        <begin position="218"/>
        <end position="238"/>
    </location>
</feature>
<feature type="transmembrane region" description="Helical" evidence="1">
    <location>
        <begin position="239"/>
        <end position="259"/>
    </location>
</feature>
<reference key="1">
    <citation type="submission" date="2007-03" db="EMBL/GenBank/DDBJ databases">
        <title>Complete sequence of Desulfotomaculum reducens MI-1.</title>
        <authorList>
            <consortium name="US DOE Joint Genome Institute"/>
            <person name="Copeland A."/>
            <person name="Lucas S."/>
            <person name="Lapidus A."/>
            <person name="Barry K."/>
            <person name="Detter J.C."/>
            <person name="Glavina del Rio T."/>
            <person name="Hammon N."/>
            <person name="Israni S."/>
            <person name="Dalin E."/>
            <person name="Tice H."/>
            <person name="Pitluck S."/>
            <person name="Sims D."/>
            <person name="Brettin T."/>
            <person name="Bruce D."/>
            <person name="Han C."/>
            <person name="Tapia R."/>
            <person name="Schmutz J."/>
            <person name="Larimer F."/>
            <person name="Land M."/>
            <person name="Hauser L."/>
            <person name="Kyrpides N."/>
            <person name="Kim E."/>
            <person name="Tebo B.M."/>
            <person name="Richardson P."/>
        </authorList>
    </citation>
    <scope>NUCLEOTIDE SEQUENCE [LARGE SCALE GENOMIC DNA]</scope>
    <source>
        <strain>ATCC BAA-1160 / DSM 100696 / MI-1</strain>
    </source>
</reference>
<protein>
    <recommendedName>
        <fullName evidence="1">ATP synthase subunit a</fullName>
    </recommendedName>
    <alternativeName>
        <fullName evidence="1">ATP synthase F0 sector subunit a</fullName>
    </alternativeName>
    <alternativeName>
        <fullName evidence="1">F-ATPase subunit 6</fullName>
    </alternativeName>
</protein>
<proteinExistence type="inferred from homology"/>
<dbReference type="EMBL" id="CP000612">
    <property type="protein sequence ID" value="ABO51658.1"/>
    <property type="molecule type" value="Genomic_DNA"/>
</dbReference>
<dbReference type="RefSeq" id="WP_011879446.1">
    <property type="nucleotide sequence ID" value="NC_009253.1"/>
</dbReference>
<dbReference type="SMR" id="A4J9A5"/>
<dbReference type="STRING" id="349161.Dred_3156"/>
<dbReference type="KEGG" id="drm:Dred_3156"/>
<dbReference type="eggNOG" id="COG0356">
    <property type="taxonomic scope" value="Bacteria"/>
</dbReference>
<dbReference type="HOGENOM" id="CLU_041018_2_3_9"/>
<dbReference type="OrthoDB" id="9789241at2"/>
<dbReference type="Proteomes" id="UP000001556">
    <property type="component" value="Chromosome"/>
</dbReference>
<dbReference type="GO" id="GO:0005886">
    <property type="term" value="C:plasma membrane"/>
    <property type="evidence" value="ECO:0007669"/>
    <property type="project" value="UniProtKB-SubCell"/>
</dbReference>
<dbReference type="GO" id="GO:0045259">
    <property type="term" value="C:proton-transporting ATP synthase complex"/>
    <property type="evidence" value="ECO:0007669"/>
    <property type="project" value="UniProtKB-KW"/>
</dbReference>
<dbReference type="GO" id="GO:0046933">
    <property type="term" value="F:proton-transporting ATP synthase activity, rotational mechanism"/>
    <property type="evidence" value="ECO:0007669"/>
    <property type="project" value="UniProtKB-UniRule"/>
</dbReference>
<dbReference type="GO" id="GO:0042777">
    <property type="term" value="P:proton motive force-driven plasma membrane ATP synthesis"/>
    <property type="evidence" value="ECO:0007669"/>
    <property type="project" value="TreeGrafter"/>
</dbReference>
<dbReference type="CDD" id="cd00310">
    <property type="entry name" value="ATP-synt_Fo_a_6"/>
    <property type="match status" value="1"/>
</dbReference>
<dbReference type="Gene3D" id="1.20.120.220">
    <property type="entry name" value="ATP synthase, F0 complex, subunit A"/>
    <property type="match status" value="1"/>
</dbReference>
<dbReference type="HAMAP" id="MF_01393">
    <property type="entry name" value="ATP_synth_a_bact"/>
    <property type="match status" value="1"/>
</dbReference>
<dbReference type="InterPro" id="IPR045082">
    <property type="entry name" value="ATP_syn_F0_a_bact/chloroplast"/>
</dbReference>
<dbReference type="InterPro" id="IPR000568">
    <property type="entry name" value="ATP_synth_F0_asu"/>
</dbReference>
<dbReference type="InterPro" id="IPR023011">
    <property type="entry name" value="ATP_synth_F0_asu_AS"/>
</dbReference>
<dbReference type="InterPro" id="IPR035908">
    <property type="entry name" value="F0_ATP_A_sf"/>
</dbReference>
<dbReference type="NCBIfam" id="TIGR01131">
    <property type="entry name" value="ATP_synt_6_or_A"/>
    <property type="match status" value="1"/>
</dbReference>
<dbReference type="PANTHER" id="PTHR42823">
    <property type="entry name" value="ATP SYNTHASE SUBUNIT A, CHLOROPLASTIC"/>
    <property type="match status" value="1"/>
</dbReference>
<dbReference type="PANTHER" id="PTHR42823:SF3">
    <property type="entry name" value="ATP SYNTHASE SUBUNIT A, CHLOROPLASTIC"/>
    <property type="match status" value="1"/>
</dbReference>
<dbReference type="Pfam" id="PF00119">
    <property type="entry name" value="ATP-synt_A"/>
    <property type="match status" value="1"/>
</dbReference>
<dbReference type="PRINTS" id="PR00123">
    <property type="entry name" value="ATPASEA"/>
</dbReference>
<dbReference type="SUPFAM" id="SSF81336">
    <property type="entry name" value="F1F0 ATP synthase subunit A"/>
    <property type="match status" value="1"/>
</dbReference>
<dbReference type="PROSITE" id="PS00449">
    <property type="entry name" value="ATPASE_A"/>
    <property type="match status" value="1"/>
</dbReference>
<sequence length="262" mass="29054">MSAAAGAAQAAEHHDMLHMVEMDLNFWNIPLFTEYDKYWHIMGLSISPRTMIMTWITMALVLLFAWACTKNQNVRSPGKAQATFEVLWEFLGGQVFSNLGNKLGAAMMPIIVTFFIYIVFANLLGLIPTLSSPTADKNTTFGLALIVVLLIHYHGLKANGVGGHIGHYFQPFKPFVVIHLIEEIARPVTLAFRLYGNIFAGEVLIAVLLGLININAYVFGGFIPSVIWLAFSVFVGFVQAFVFSMLTIAYVSQFAAHEADHH</sequence>
<accession>A4J9A5</accession>
<comment type="function">
    <text evidence="1">Key component of the proton channel; it plays a direct role in the translocation of protons across the membrane.</text>
</comment>
<comment type="subunit">
    <text evidence="1">F-type ATPases have 2 components, CF(1) - the catalytic core - and CF(0) - the membrane proton channel. CF(1) has five subunits: alpha(3), beta(3), gamma(1), delta(1), epsilon(1). CF(0) has three main subunits: a(1), b(2) and c(9-12). The alpha and beta chains form an alternating ring which encloses part of the gamma chain. CF(1) is attached to CF(0) by a central stalk formed by the gamma and epsilon chains, while a peripheral stalk is formed by the delta and b chains.</text>
</comment>
<comment type="subcellular location">
    <subcellularLocation>
        <location evidence="1">Cell membrane</location>
        <topology evidence="1">Multi-pass membrane protein</topology>
    </subcellularLocation>
</comment>
<comment type="similarity">
    <text evidence="1">Belongs to the ATPase A chain family.</text>
</comment>
<keyword id="KW-0066">ATP synthesis</keyword>
<keyword id="KW-1003">Cell membrane</keyword>
<keyword id="KW-0138">CF(0)</keyword>
<keyword id="KW-0375">Hydrogen ion transport</keyword>
<keyword id="KW-0406">Ion transport</keyword>
<keyword id="KW-0472">Membrane</keyword>
<keyword id="KW-1185">Reference proteome</keyword>
<keyword id="KW-0812">Transmembrane</keyword>
<keyword id="KW-1133">Transmembrane helix</keyword>
<keyword id="KW-0813">Transport</keyword>
<gene>
    <name evidence="1" type="primary">atpB</name>
    <name type="ordered locus">Dred_3156</name>
</gene>
<organism>
    <name type="scientific">Desulforamulus reducens (strain ATCC BAA-1160 / DSM 100696 / MI-1)</name>
    <name type="common">Desulfotomaculum reducens</name>
    <dbReference type="NCBI Taxonomy" id="349161"/>
    <lineage>
        <taxon>Bacteria</taxon>
        <taxon>Bacillati</taxon>
        <taxon>Bacillota</taxon>
        <taxon>Clostridia</taxon>
        <taxon>Eubacteriales</taxon>
        <taxon>Peptococcaceae</taxon>
        <taxon>Desulforamulus</taxon>
    </lineage>
</organism>
<name>ATP6_DESRM</name>
<evidence type="ECO:0000255" key="1">
    <source>
        <dbReference type="HAMAP-Rule" id="MF_01393"/>
    </source>
</evidence>